<feature type="chain" id="PRO_0000288206" description="tRNA (guanine-N(7)-)-methyltransferase">
    <location>
        <begin position="1"/>
        <end position="243"/>
    </location>
</feature>
<feature type="active site" evidence="1">
    <location>
        <position position="149"/>
    </location>
</feature>
<feature type="binding site" evidence="2">
    <location>
        <position position="74"/>
    </location>
    <ligand>
        <name>S-adenosyl-L-methionine</name>
        <dbReference type="ChEBI" id="CHEBI:59789"/>
    </ligand>
</feature>
<feature type="binding site" evidence="2">
    <location>
        <position position="99"/>
    </location>
    <ligand>
        <name>S-adenosyl-L-methionine</name>
        <dbReference type="ChEBI" id="CHEBI:59789"/>
    </ligand>
</feature>
<feature type="binding site" evidence="2">
    <location>
        <position position="126"/>
    </location>
    <ligand>
        <name>S-adenosyl-L-methionine</name>
        <dbReference type="ChEBI" id="CHEBI:59789"/>
    </ligand>
</feature>
<feature type="binding site" evidence="2">
    <location>
        <position position="149"/>
    </location>
    <ligand>
        <name>S-adenosyl-L-methionine</name>
        <dbReference type="ChEBI" id="CHEBI:59789"/>
    </ligand>
</feature>
<feature type="binding site" evidence="2">
    <location>
        <position position="153"/>
    </location>
    <ligand>
        <name>substrate</name>
    </ligand>
</feature>
<feature type="binding site" evidence="2">
    <location>
        <position position="185"/>
    </location>
    <ligand>
        <name>substrate</name>
    </ligand>
</feature>
<feature type="binding site" evidence="2">
    <location>
        <begin position="221"/>
        <end position="224"/>
    </location>
    <ligand>
        <name>substrate</name>
    </ligand>
</feature>
<proteinExistence type="inferred from homology"/>
<comment type="function">
    <text evidence="2">Catalyzes the formation of N(7)-methylguanine at position 46 (m7G46) in tRNA.</text>
</comment>
<comment type="catalytic activity">
    <reaction evidence="2">
        <text>guanosine(46) in tRNA + S-adenosyl-L-methionine = N(7)-methylguanosine(46) in tRNA + S-adenosyl-L-homocysteine</text>
        <dbReference type="Rhea" id="RHEA:42708"/>
        <dbReference type="Rhea" id="RHEA-COMP:10188"/>
        <dbReference type="Rhea" id="RHEA-COMP:10189"/>
        <dbReference type="ChEBI" id="CHEBI:57856"/>
        <dbReference type="ChEBI" id="CHEBI:59789"/>
        <dbReference type="ChEBI" id="CHEBI:74269"/>
        <dbReference type="ChEBI" id="CHEBI:74480"/>
        <dbReference type="EC" id="2.1.1.33"/>
    </reaction>
</comment>
<comment type="pathway">
    <text evidence="2">tRNA modification; N(7)-methylguanine-tRNA biosynthesis.</text>
</comment>
<comment type="similarity">
    <text evidence="2">Belongs to the class I-like SAM-binding methyltransferase superfamily. TrmB family.</text>
</comment>
<keyword id="KW-0489">Methyltransferase</keyword>
<keyword id="KW-1185">Reference proteome</keyword>
<keyword id="KW-0949">S-adenosyl-L-methionine</keyword>
<keyword id="KW-0808">Transferase</keyword>
<keyword id="KW-0819">tRNA processing</keyword>
<evidence type="ECO:0000250" key="1"/>
<evidence type="ECO:0000255" key="2">
    <source>
        <dbReference type="HAMAP-Rule" id="MF_01057"/>
    </source>
</evidence>
<dbReference type="EC" id="2.1.1.33" evidence="2"/>
<dbReference type="EMBL" id="CP000510">
    <property type="protein sequence ID" value="ABM02238.1"/>
    <property type="molecule type" value="Genomic_DNA"/>
</dbReference>
<dbReference type="RefSeq" id="WP_011768797.1">
    <property type="nucleotide sequence ID" value="NC_008709.1"/>
</dbReference>
<dbReference type="SMR" id="A1SRX3"/>
<dbReference type="STRING" id="357804.Ping_0377"/>
<dbReference type="KEGG" id="pin:Ping_0377"/>
<dbReference type="eggNOG" id="COG0220">
    <property type="taxonomic scope" value="Bacteria"/>
</dbReference>
<dbReference type="HOGENOM" id="CLU_050910_0_1_6"/>
<dbReference type="OrthoDB" id="9802090at2"/>
<dbReference type="UniPathway" id="UPA00989"/>
<dbReference type="Proteomes" id="UP000000639">
    <property type="component" value="Chromosome"/>
</dbReference>
<dbReference type="GO" id="GO:0043527">
    <property type="term" value="C:tRNA methyltransferase complex"/>
    <property type="evidence" value="ECO:0007669"/>
    <property type="project" value="TreeGrafter"/>
</dbReference>
<dbReference type="GO" id="GO:0008176">
    <property type="term" value="F:tRNA (guanine(46)-N7)-methyltransferase activity"/>
    <property type="evidence" value="ECO:0007669"/>
    <property type="project" value="UniProtKB-UniRule"/>
</dbReference>
<dbReference type="FunFam" id="3.40.50.150:FF:000024">
    <property type="entry name" value="tRNA (guanine-N(7)-)-methyltransferase"/>
    <property type="match status" value="1"/>
</dbReference>
<dbReference type="Gene3D" id="3.40.50.150">
    <property type="entry name" value="Vaccinia Virus protein VP39"/>
    <property type="match status" value="1"/>
</dbReference>
<dbReference type="HAMAP" id="MF_01057">
    <property type="entry name" value="tRNA_methyltr_TrmB"/>
    <property type="match status" value="1"/>
</dbReference>
<dbReference type="InterPro" id="IPR029063">
    <property type="entry name" value="SAM-dependent_MTases_sf"/>
</dbReference>
<dbReference type="InterPro" id="IPR003358">
    <property type="entry name" value="tRNA_(Gua-N-7)_MeTrfase_Trmb"/>
</dbReference>
<dbReference type="InterPro" id="IPR055361">
    <property type="entry name" value="tRNA_methyltr_TrmB_bact"/>
</dbReference>
<dbReference type="NCBIfam" id="TIGR00091">
    <property type="entry name" value="tRNA (guanosine(46)-N7)-methyltransferase TrmB"/>
    <property type="match status" value="1"/>
</dbReference>
<dbReference type="PANTHER" id="PTHR23417">
    <property type="entry name" value="3-DEOXY-D-MANNO-OCTULOSONIC-ACID TRANSFERASE/TRNA GUANINE-N 7 - -METHYLTRANSFERASE"/>
    <property type="match status" value="1"/>
</dbReference>
<dbReference type="PANTHER" id="PTHR23417:SF14">
    <property type="entry name" value="PENTACOTRIPEPTIDE-REPEAT REGION OF PRORP DOMAIN-CONTAINING PROTEIN"/>
    <property type="match status" value="1"/>
</dbReference>
<dbReference type="Pfam" id="PF02390">
    <property type="entry name" value="Methyltransf_4"/>
    <property type="match status" value="1"/>
</dbReference>
<dbReference type="SUPFAM" id="SSF53335">
    <property type="entry name" value="S-adenosyl-L-methionine-dependent methyltransferases"/>
    <property type="match status" value="1"/>
</dbReference>
<dbReference type="PROSITE" id="PS51625">
    <property type="entry name" value="SAM_MT_TRMB"/>
    <property type="match status" value="1"/>
</dbReference>
<accession>A1SRX3</accession>
<name>TRMB_PSYIN</name>
<gene>
    <name evidence="2" type="primary">trmB</name>
    <name type="ordered locus">Ping_0377</name>
</gene>
<sequence>MTDQEHSASEENADSVEKHKYMRKIRSFVKREGRMTNRQQTAIDTLWDTMGIDFEEKLIDFNALFGRQAPIVLEIGFGMGKSLIEMAKNAPEKNFIGIEVHGPGVGACLADAGEAGVTNLRVINHDAVEVLDKMIPDNSLAVFQLYFPDPWHKARHHKRRIVQPHFIENMRHKLAIGGVIHMATDWENYAEHMLAVLQASPDFKNTSESDYAPRPEWRPLTKFENRGNNLGHGVWDLLFERIS</sequence>
<organism>
    <name type="scientific">Psychromonas ingrahamii (strain DSM 17664 / CCUG 51855 / 37)</name>
    <dbReference type="NCBI Taxonomy" id="357804"/>
    <lineage>
        <taxon>Bacteria</taxon>
        <taxon>Pseudomonadati</taxon>
        <taxon>Pseudomonadota</taxon>
        <taxon>Gammaproteobacteria</taxon>
        <taxon>Alteromonadales</taxon>
        <taxon>Psychromonadaceae</taxon>
        <taxon>Psychromonas</taxon>
    </lineage>
</organism>
<reference key="1">
    <citation type="journal article" date="2008" name="BMC Genomics">
        <title>Genomics of an extreme psychrophile, Psychromonas ingrahamii.</title>
        <authorList>
            <person name="Riley M."/>
            <person name="Staley J.T."/>
            <person name="Danchin A."/>
            <person name="Wang T.Z."/>
            <person name="Brettin T.S."/>
            <person name="Hauser L.J."/>
            <person name="Land M.L."/>
            <person name="Thompson L.S."/>
        </authorList>
    </citation>
    <scope>NUCLEOTIDE SEQUENCE [LARGE SCALE GENOMIC DNA]</scope>
    <source>
        <strain>DSM 17664 / CCUG 51855 / 37</strain>
    </source>
</reference>
<protein>
    <recommendedName>
        <fullName evidence="2">tRNA (guanine-N(7)-)-methyltransferase</fullName>
        <ecNumber evidence="2">2.1.1.33</ecNumber>
    </recommendedName>
    <alternativeName>
        <fullName evidence="2">tRNA (guanine(46)-N(7))-methyltransferase</fullName>
    </alternativeName>
    <alternativeName>
        <fullName evidence="2">tRNA(m7G46)-methyltransferase</fullName>
    </alternativeName>
</protein>